<proteinExistence type="inferred from homology"/>
<protein>
    <recommendedName>
        <fullName evidence="1">Glutamate 5-kinase</fullName>
        <ecNumber evidence="1">2.7.2.11</ecNumber>
    </recommendedName>
    <alternativeName>
        <fullName evidence="1">Gamma-glutamyl kinase</fullName>
        <shortName evidence="1">GK</shortName>
    </alternativeName>
</protein>
<gene>
    <name evidence="1" type="primary">proB</name>
    <name type="ordered locus">P9301_08491</name>
</gene>
<feature type="chain" id="PRO_1000081088" description="Glutamate 5-kinase">
    <location>
        <begin position="1"/>
        <end position="360"/>
    </location>
</feature>
<feature type="domain" description="PUA" evidence="1">
    <location>
        <begin position="275"/>
        <end position="356"/>
    </location>
</feature>
<feature type="binding site" evidence="1">
    <location>
        <position position="7"/>
    </location>
    <ligand>
        <name>ATP</name>
        <dbReference type="ChEBI" id="CHEBI:30616"/>
    </ligand>
</feature>
<feature type="binding site" evidence="1">
    <location>
        <position position="47"/>
    </location>
    <ligand>
        <name>substrate</name>
    </ligand>
</feature>
<feature type="binding site" evidence="1">
    <location>
        <position position="134"/>
    </location>
    <ligand>
        <name>substrate</name>
    </ligand>
</feature>
<feature type="binding site" evidence="1">
    <location>
        <position position="146"/>
    </location>
    <ligand>
        <name>substrate</name>
    </ligand>
</feature>
<feature type="binding site" evidence="1">
    <location>
        <begin position="166"/>
        <end position="167"/>
    </location>
    <ligand>
        <name>ATP</name>
        <dbReference type="ChEBI" id="CHEBI:30616"/>
    </ligand>
</feature>
<feature type="binding site" evidence="1">
    <location>
        <begin position="210"/>
        <end position="216"/>
    </location>
    <ligand>
        <name>ATP</name>
        <dbReference type="ChEBI" id="CHEBI:30616"/>
    </ligand>
</feature>
<comment type="function">
    <text evidence="1">Catalyzes the transfer of a phosphate group to glutamate to form L-glutamate 5-phosphate.</text>
</comment>
<comment type="catalytic activity">
    <reaction evidence="1">
        <text>L-glutamate + ATP = L-glutamyl 5-phosphate + ADP</text>
        <dbReference type="Rhea" id="RHEA:14877"/>
        <dbReference type="ChEBI" id="CHEBI:29985"/>
        <dbReference type="ChEBI" id="CHEBI:30616"/>
        <dbReference type="ChEBI" id="CHEBI:58274"/>
        <dbReference type="ChEBI" id="CHEBI:456216"/>
        <dbReference type="EC" id="2.7.2.11"/>
    </reaction>
</comment>
<comment type="pathway">
    <text evidence="1">Amino-acid biosynthesis; L-proline biosynthesis; L-glutamate 5-semialdehyde from L-glutamate: step 1/2.</text>
</comment>
<comment type="subcellular location">
    <subcellularLocation>
        <location evidence="1">Cytoplasm</location>
    </subcellularLocation>
</comment>
<comment type="similarity">
    <text evidence="1">Belongs to the glutamate 5-kinase family.</text>
</comment>
<dbReference type="EC" id="2.7.2.11" evidence="1"/>
<dbReference type="EMBL" id="CP000576">
    <property type="protein sequence ID" value="ABO17472.1"/>
    <property type="molecule type" value="Genomic_DNA"/>
</dbReference>
<dbReference type="RefSeq" id="WP_011862823.1">
    <property type="nucleotide sequence ID" value="NC_009091.1"/>
</dbReference>
<dbReference type="SMR" id="A3PCJ7"/>
<dbReference type="STRING" id="167546.P9301_08491"/>
<dbReference type="KEGG" id="pmg:P9301_08491"/>
<dbReference type="eggNOG" id="COG0263">
    <property type="taxonomic scope" value="Bacteria"/>
</dbReference>
<dbReference type="HOGENOM" id="CLU_025400_2_0_3"/>
<dbReference type="OrthoDB" id="9804434at2"/>
<dbReference type="UniPathway" id="UPA00098">
    <property type="reaction ID" value="UER00359"/>
</dbReference>
<dbReference type="Proteomes" id="UP000001430">
    <property type="component" value="Chromosome"/>
</dbReference>
<dbReference type="GO" id="GO:0005829">
    <property type="term" value="C:cytosol"/>
    <property type="evidence" value="ECO:0007669"/>
    <property type="project" value="TreeGrafter"/>
</dbReference>
<dbReference type="GO" id="GO:0005524">
    <property type="term" value="F:ATP binding"/>
    <property type="evidence" value="ECO:0007669"/>
    <property type="project" value="UniProtKB-KW"/>
</dbReference>
<dbReference type="GO" id="GO:0004349">
    <property type="term" value="F:glutamate 5-kinase activity"/>
    <property type="evidence" value="ECO:0007669"/>
    <property type="project" value="UniProtKB-UniRule"/>
</dbReference>
<dbReference type="GO" id="GO:0003723">
    <property type="term" value="F:RNA binding"/>
    <property type="evidence" value="ECO:0007669"/>
    <property type="project" value="InterPro"/>
</dbReference>
<dbReference type="GO" id="GO:0055129">
    <property type="term" value="P:L-proline biosynthetic process"/>
    <property type="evidence" value="ECO:0007669"/>
    <property type="project" value="UniProtKB-UniRule"/>
</dbReference>
<dbReference type="CDD" id="cd04242">
    <property type="entry name" value="AAK_G5K_ProB"/>
    <property type="match status" value="1"/>
</dbReference>
<dbReference type="CDD" id="cd21157">
    <property type="entry name" value="PUA_G5K"/>
    <property type="match status" value="1"/>
</dbReference>
<dbReference type="FunFam" id="3.40.1160.10:FF:000018">
    <property type="entry name" value="Glutamate 5-kinase"/>
    <property type="match status" value="1"/>
</dbReference>
<dbReference type="Gene3D" id="3.40.1160.10">
    <property type="entry name" value="Acetylglutamate kinase-like"/>
    <property type="match status" value="1"/>
</dbReference>
<dbReference type="Gene3D" id="2.30.130.10">
    <property type="entry name" value="PUA domain"/>
    <property type="match status" value="1"/>
</dbReference>
<dbReference type="HAMAP" id="MF_00456">
    <property type="entry name" value="ProB"/>
    <property type="match status" value="1"/>
</dbReference>
<dbReference type="InterPro" id="IPR036393">
    <property type="entry name" value="AceGlu_kinase-like_sf"/>
</dbReference>
<dbReference type="InterPro" id="IPR001048">
    <property type="entry name" value="Asp/Glu/Uridylate_kinase"/>
</dbReference>
<dbReference type="InterPro" id="IPR041739">
    <property type="entry name" value="G5K_ProB"/>
</dbReference>
<dbReference type="InterPro" id="IPR001057">
    <property type="entry name" value="Glu/AcGlu_kinase"/>
</dbReference>
<dbReference type="InterPro" id="IPR011529">
    <property type="entry name" value="Glu_5kinase"/>
</dbReference>
<dbReference type="InterPro" id="IPR005715">
    <property type="entry name" value="Glu_5kinase/COase_Synthase"/>
</dbReference>
<dbReference type="InterPro" id="IPR019797">
    <property type="entry name" value="Glutamate_5-kinase_CS"/>
</dbReference>
<dbReference type="InterPro" id="IPR002478">
    <property type="entry name" value="PUA"/>
</dbReference>
<dbReference type="InterPro" id="IPR015947">
    <property type="entry name" value="PUA-like_sf"/>
</dbReference>
<dbReference type="InterPro" id="IPR036974">
    <property type="entry name" value="PUA_sf"/>
</dbReference>
<dbReference type="NCBIfam" id="TIGR01027">
    <property type="entry name" value="proB"/>
    <property type="match status" value="1"/>
</dbReference>
<dbReference type="PANTHER" id="PTHR43654">
    <property type="entry name" value="GLUTAMATE 5-KINASE"/>
    <property type="match status" value="1"/>
</dbReference>
<dbReference type="PANTHER" id="PTHR43654:SF3">
    <property type="entry name" value="GLUTAMATE 5-KINASE"/>
    <property type="match status" value="1"/>
</dbReference>
<dbReference type="Pfam" id="PF00696">
    <property type="entry name" value="AA_kinase"/>
    <property type="match status" value="1"/>
</dbReference>
<dbReference type="Pfam" id="PF01472">
    <property type="entry name" value="PUA"/>
    <property type="match status" value="1"/>
</dbReference>
<dbReference type="PIRSF" id="PIRSF000729">
    <property type="entry name" value="GK"/>
    <property type="match status" value="1"/>
</dbReference>
<dbReference type="PRINTS" id="PR00474">
    <property type="entry name" value="GLU5KINASE"/>
</dbReference>
<dbReference type="SMART" id="SM00359">
    <property type="entry name" value="PUA"/>
    <property type="match status" value="1"/>
</dbReference>
<dbReference type="SUPFAM" id="SSF53633">
    <property type="entry name" value="Carbamate kinase-like"/>
    <property type="match status" value="1"/>
</dbReference>
<dbReference type="SUPFAM" id="SSF88697">
    <property type="entry name" value="PUA domain-like"/>
    <property type="match status" value="1"/>
</dbReference>
<dbReference type="PROSITE" id="PS00902">
    <property type="entry name" value="GLUTAMATE_5_KINASE"/>
    <property type="match status" value="1"/>
</dbReference>
<dbReference type="PROSITE" id="PS50890">
    <property type="entry name" value="PUA"/>
    <property type="match status" value="1"/>
</dbReference>
<organism>
    <name type="scientific">Prochlorococcus marinus (strain MIT 9301)</name>
    <dbReference type="NCBI Taxonomy" id="167546"/>
    <lineage>
        <taxon>Bacteria</taxon>
        <taxon>Bacillati</taxon>
        <taxon>Cyanobacteriota</taxon>
        <taxon>Cyanophyceae</taxon>
        <taxon>Synechococcales</taxon>
        <taxon>Prochlorococcaceae</taxon>
        <taxon>Prochlorococcus</taxon>
    </lineage>
</organism>
<sequence>MKTWVIKIGTSILRGTEETSTEEVIENLSRSFTSFLSKGNKLILVTSGAVGLGCQKLNIKTRPNDLSTLQATAAVGQVNLMSLYDKVFNKLGLNIAQILITKADFNSRESFNNASKTLKRLIDLNVIPIVNENDTVANEELKYGDNDTLSALVALAINANKLILLTDIENLYSKDPRNNKDAQPIKEVHNSELKEIKDKNIQNSNNEWGTGGISTKLISAEIATKGGVEVQLVDGTNKKNLIEIFNDNKIGTLFYPVEKPIGNKKSWLSHAIQTVGKITLDDGASFAIKKKGASLLAVGVKNVEGNFTINQAVKIVNTNDKEVAKGLVSISSDKLRSILNNKENNNSSIIVVHRDVLALS</sequence>
<evidence type="ECO:0000255" key="1">
    <source>
        <dbReference type="HAMAP-Rule" id="MF_00456"/>
    </source>
</evidence>
<reference key="1">
    <citation type="journal article" date="2007" name="PLoS Genet.">
        <title>Patterns and implications of gene gain and loss in the evolution of Prochlorococcus.</title>
        <authorList>
            <person name="Kettler G.C."/>
            <person name="Martiny A.C."/>
            <person name="Huang K."/>
            <person name="Zucker J."/>
            <person name="Coleman M.L."/>
            <person name="Rodrigue S."/>
            <person name="Chen F."/>
            <person name="Lapidus A."/>
            <person name="Ferriera S."/>
            <person name="Johnson J."/>
            <person name="Steglich C."/>
            <person name="Church G.M."/>
            <person name="Richardson P."/>
            <person name="Chisholm S.W."/>
        </authorList>
    </citation>
    <scope>NUCLEOTIDE SEQUENCE [LARGE SCALE GENOMIC DNA]</scope>
    <source>
        <strain>MIT 9301</strain>
    </source>
</reference>
<keyword id="KW-0028">Amino-acid biosynthesis</keyword>
<keyword id="KW-0067">ATP-binding</keyword>
<keyword id="KW-0963">Cytoplasm</keyword>
<keyword id="KW-0418">Kinase</keyword>
<keyword id="KW-0547">Nucleotide-binding</keyword>
<keyword id="KW-0641">Proline biosynthesis</keyword>
<keyword id="KW-1185">Reference proteome</keyword>
<keyword id="KW-0808">Transferase</keyword>
<name>PROB_PROM0</name>
<accession>A3PCJ7</accession>